<accession>A1WUI6</accession>
<organism>
    <name type="scientific">Halorhodospira halophila (strain DSM 244 / SL1)</name>
    <name type="common">Ectothiorhodospira halophila (strain DSM 244 / SL1)</name>
    <dbReference type="NCBI Taxonomy" id="349124"/>
    <lineage>
        <taxon>Bacteria</taxon>
        <taxon>Pseudomonadati</taxon>
        <taxon>Pseudomonadota</taxon>
        <taxon>Gammaproteobacteria</taxon>
        <taxon>Chromatiales</taxon>
        <taxon>Ectothiorhodospiraceae</taxon>
        <taxon>Halorhodospira</taxon>
    </lineage>
</organism>
<evidence type="ECO:0000255" key="1">
    <source>
        <dbReference type="HAMAP-Rule" id="MF_00381"/>
    </source>
</evidence>
<evidence type="ECO:0000256" key="2">
    <source>
        <dbReference type="SAM" id="MobiDB-lite"/>
    </source>
</evidence>
<dbReference type="EMBL" id="CP000544">
    <property type="protein sequence ID" value="ABM61348.1"/>
    <property type="molecule type" value="Genomic_DNA"/>
</dbReference>
<dbReference type="RefSeq" id="WP_011813371.1">
    <property type="nucleotide sequence ID" value="NC_008789.1"/>
</dbReference>
<dbReference type="SMR" id="A1WUI6"/>
<dbReference type="STRING" id="349124.Hhal_0562"/>
<dbReference type="KEGG" id="hha:Hhal_0562"/>
<dbReference type="eggNOG" id="COG0776">
    <property type="taxonomic scope" value="Bacteria"/>
</dbReference>
<dbReference type="HOGENOM" id="CLU_105066_2_0_6"/>
<dbReference type="OrthoDB" id="9804203at2"/>
<dbReference type="Proteomes" id="UP000000647">
    <property type="component" value="Chromosome"/>
</dbReference>
<dbReference type="GO" id="GO:0005694">
    <property type="term" value="C:chromosome"/>
    <property type="evidence" value="ECO:0007669"/>
    <property type="project" value="InterPro"/>
</dbReference>
<dbReference type="GO" id="GO:0005829">
    <property type="term" value="C:cytosol"/>
    <property type="evidence" value="ECO:0007669"/>
    <property type="project" value="TreeGrafter"/>
</dbReference>
<dbReference type="GO" id="GO:0003677">
    <property type="term" value="F:DNA binding"/>
    <property type="evidence" value="ECO:0007669"/>
    <property type="project" value="UniProtKB-UniRule"/>
</dbReference>
<dbReference type="GO" id="GO:0030527">
    <property type="term" value="F:structural constituent of chromatin"/>
    <property type="evidence" value="ECO:0007669"/>
    <property type="project" value="InterPro"/>
</dbReference>
<dbReference type="GO" id="GO:0006310">
    <property type="term" value="P:DNA recombination"/>
    <property type="evidence" value="ECO:0007669"/>
    <property type="project" value="UniProtKB-UniRule"/>
</dbReference>
<dbReference type="GO" id="GO:0006355">
    <property type="term" value="P:regulation of DNA-templated transcription"/>
    <property type="evidence" value="ECO:0007669"/>
    <property type="project" value="UniProtKB-UniRule"/>
</dbReference>
<dbReference type="GO" id="GO:0006417">
    <property type="term" value="P:regulation of translation"/>
    <property type="evidence" value="ECO:0007669"/>
    <property type="project" value="UniProtKB-UniRule"/>
</dbReference>
<dbReference type="CDD" id="cd13836">
    <property type="entry name" value="IHF_B"/>
    <property type="match status" value="1"/>
</dbReference>
<dbReference type="FunFam" id="4.10.520.10:FF:000003">
    <property type="entry name" value="Integration host factor subunit beta"/>
    <property type="match status" value="1"/>
</dbReference>
<dbReference type="Gene3D" id="4.10.520.10">
    <property type="entry name" value="IHF-like DNA-binding proteins"/>
    <property type="match status" value="1"/>
</dbReference>
<dbReference type="HAMAP" id="MF_00381">
    <property type="entry name" value="IHF_beta"/>
    <property type="match status" value="1"/>
</dbReference>
<dbReference type="InterPro" id="IPR000119">
    <property type="entry name" value="Hist_DNA-bd"/>
</dbReference>
<dbReference type="InterPro" id="IPR020816">
    <property type="entry name" value="Histone-like_DNA-bd_CS"/>
</dbReference>
<dbReference type="InterPro" id="IPR010992">
    <property type="entry name" value="IHF-like_DNA-bd_dom_sf"/>
</dbReference>
<dbReference type="InterPro" id="IPR005685">
    <property type="entry name" value="IHF_beta"/>
</dbReference>
<dbReference type="NCBIfam" id="TIGR00988">
    <property type="entry name" value="hip"/>
    <property type="match status" value="1"/>
</dbReference>
<dbReference type="NCBIfam" id="NF001222">
    <property type="entry name" value="PRK00199.1"/>
    <property type="match status" value="1"/>
</dbReference>
<dbReference type="PANTHER" id="PTHR33175">
    <property type="entry name" value="DNA-BINDING PROTEIN HU"/>
    <property type="match status" value="1"/>
</dbReference>
<dbReference type="PANTHER" id="PTHR33175:SF5">
    <property type="entry name" value="INTEGRATION HOST FACTOR SUBUNIT BETA"/>
    <property type="match status" value="1"/>
</dbReference>
<dbReference type="Pfam" id="PF00216">
    <property type="entry name" value="Bac_DNA_binding"/>
    <property type="match status" value="1"/>
</dbReference>
<dbReference type="PRINTS" id="PR01727">
    <property type="entry name" value="DNABINDINGHU"/>
</dbReference>
<dbReference type="SMART" id="SM00411">
    <property type="entry name" value="BHL"/>
    <property type="match status" value="1"/>
</dbReference>
<dbReference type="SUPFAM" id="SSF47729">
    <property type="entry name" value="IHF-like DNA-binding proteins"/>
    <property type="match status" value="1"/>
</dbReference>
<dbReference type="PROSITE" id="PS00045">
    <property type="entry name" value="HISTONE_LIKE"/>
    <property type="match status" value="1"/>
</dbReference>
<feature type="chain" id="PRO_1000060610" description="Integration host factor subunit beta">
    <location>
        <begin position="1"/>
        <end position="102"/>
    </location>
</feature>
<feature type="region of interest" description="Disordered" evidence="2">
    <location>
        <begin position="54"/>
        <end position="102"/>
    </location>
</feature>
<feature type="compositionally biased region" description="Basic and acidic residues" evidence="2">
    <location>
        <begin position="82"/>
        <end position="91"/>
    </location>
</feature>
<feature type="compositionally biased region" description="Polar residues" evidence="2">
    <location>
        <begin position="93"/>
        <end position="102"/>
    </location>
</feature>
<proteinExistence type="inferred from homology"/>
<sequence>MTKSELIEAIASKQPHLAHKDVEDAVKKMLEHMSETLANGKRIEIRGFGSFSLHHRPARMGRNPKTGEPVALPAKYVPHFKPGKELRERVNSSRHQAPLRSQ</sequence>
<comment type="function">
    <text evidence="1">This protein is one of the two subunits of integration host factor, a specific DNA-binding protein that functions in genetic recombination as well as in transcriptional and translational control.</text>
</comment>
<comment type="subunit">
    <text evidence="1">Heterodimer of an alpha and a beta chain.</text>
</comment>
<comment type="similarity">
    <text evidence="1">Belongs to the bacterial histone-like protein family.</text>
</comment>
<keyword id="KW-0233">DNA recombination</keyword>
<keyword id="KW-0238">DNA-binding</keyword>
<keyword id="KW-1185">Reference proteome</keyword>
<keyword id="KW-0804">Transcription</keyword>
<keyword id="KW-0805">Transcription regulation</keyword>
<keyword id="KW-0810">Translation regulation</keyword>
<reference key="1">
    <citation type="submission" date="2006-12" db="EMBL/GenBank/DDBJ databases">
        <title>Complete sequence of Halorhodospira halophila SL1.</title>
        <authorList>
            <consortium name="US DOE Joint Genome Institute"/>
            <person name="Copeland A."/>
            <person name="Lucas S."/>
            <person name="Lapidus A."/>
            <person name="Barry K."/>
            <person name="Detter J.C."/>
            <person name="Glavina del Rio T."/>
            <person name="Hammon N."/>
            <person name="Israni S."/>
            <person name="Dalin E."/>
            <person name="Tice H."/>
            <person name="Pitluck S."/>
            <person name="Saunders E."/>
            <person name="Brettin T."/>
            <person name="Bruce D."/>
            <person name="Han C."/>
            <person name="Tapia R."/>
            <person name="Schmutz J."/>
            <person name="Larimer F."/>
            <person name="Land M."/>
            <person name="Hauser L."/>
            <person name="Kyrpides N."/>
            <person name="Mikhailova N."/>
            <person name="Hoff W."/>
            <person name="Richardson P."/>
        </authorList>
    </citation>
    <scope>NUCLEOTIDE SEQUENCE [LARGE SCALE GENOMIC DNA]</scope>
    <source>
        <strain>DSM 244 / SL1</strain>
    </source>
</reference>
<protein>
    <recommendedName>
        <fullName evidence="1">Integration host factor subunit beta</fullName>
        <shortName evidence="1">IHF-beta</shortName>
    </recommendedName>
</protein>
<gene>
    <name evidence="1" type="primary">ihfB</name>
    <name evidence="1" type="synonym">himD</name>
    <name type="ordered locus">Hhal_0562</name>
</gene>
<name>IHFB_HALHL</name>